<comment type="function">
    <text evidence="1">Plays a critical role in the incorporation of lipoproteins in the outer membrane after they are released by the LolA protein.</text>
</comment>
<comment type="subunit">
    <text evidence="1">Monomer.</text>
</comment>
<comment type="subcellular location">
    <subcellularLocation>
        <location evidence="1">Cell outer membrane</location>
        <topology evidence="1">Lipid-anchor</topology>
    </subcellularLocation>
</comment>
<comment type="similarity">
    <text evidence="1">Belongs to the LolB family.</text>
</comment>
<protein>
    <recommendedName>
        <fullName evidence="1">Outer-membrane lipoprotein LolB</fullName>
    </recommendedName>
</protein>
<sequence>MIRRVLLLSLALLLAGCANEALFRPKPALESAADAPFSVSGRLSANLDGKGHVANFDWRHLPPRDEVAINSPLGNTVAKVLRDPGGVTLLADGKRWQADDVESLTRQVMGWPLPLSNLVWWIRGLPAPGVESRVDADGNLEQQGWHIRFIRDADVDSDHPKRVEMQREGLTVKVVVQSWQ</sequence>
<keyword id="KW-0998">Cell outer membrane</keyword>
<keyword id="KW-0143">Chaperone</keyword>
<keyword id="KW-0449">Lipoprotein</keyword>
<keyword id="KW-0472">Membrane</keyword>
<keyword id="KW-0564">Palmitate</keyword>
<keyword id="KW-0653">Protein transport</keyword>
<keyword id="KW-1185">Reference proteome</keyword>
<keyword id="KW-0732">Signal</keyword>
<keyword id="KW-0813">Transport</keyword>
<gene>
    <name evidence="1" type="primary">lolB</name>
    <name type="ordered locus">CV_4060</name>
</gene>
<name>LOLB_CHRVO</name>
<feature type="signal peptide" evidence="1">
    <location>
        <begin position="1"/>
        <end position="16"/>
    </location>
</feature>
<feature type="chain" id="PRO_0000018294" description="Outer-membrane lipoprotein LolB">
    <location>
        <begin position="17"/>
        <end position="180"/>
    </location>
</feature>
<feature type="lipid moiety-binding region" description="N-palmitoyl cysteine" evidence="1">
    <location>
        <position position="17"/>
    </location>
</feature>
<feature type="lipid moiety-binding region" description="S-diacylglycerol cysteine" evidence="1">
    <location>
        <position position="17"/>
    </location>
</feature>
<reference key="1">
    <citation type="journal article" date="2003" name="Proc. Natl. Acad. Sci. U.S.A.">
        <title>The complete genome sequence of Chromobacterium violaceum reveals remarkable and exploitable bacterial adaptability.</title>
        <authorList>
            <person name="Vasconcelos A.T.R."/>
            <person name="de Almeida D.F."/>
            <person name="Hungria M."/>
            <person name="Guimaraes C.T."/>
            <person name="Antonio R.V."/>
            <person name="Almeida F.C."/>
            <person name="de Almeida L.G.P."/>
            <person name="de Almeida R."/>
            <person name="Alves-Gomes J.A."/>
            <person name="Andrade E.M."/>
            <person name="Araripe J."/>
            <person name="de Araujo M.F.F."/>
            <person name="Astolfi-Filho S."/>
            <person name="Azevedo V."/>
            <person name="Baptista A.J."/>
            <person name="Bataus L.A.M."/>
            <person name="Batista J.S."/>
            <person name="Belo A."/>
            <person name="van den Berg C."/>
            <person name="Bogo M."/>
            <person name="Bonatto S."/>
            <person name="Bordignon J."/>
            <person name="Brigido M.M."/>
            <person name="Brito C.A."/>
            <person name="Brocchi M."/>
            <person name="Burity H.A."/>
            <person name="Camargo A.A."/>
            <person name="Cardoso D.D.P."/>
            <person name="Carneiro N.P."/>
            <person name="Carraro D.M."/>
            <person name="Carvalho C.M.B."/>
            <person name="Cascardo J.C.M."/>
            <person name="Cavada B.S."/>
            <person name="Chueire L.M.O."/>
            <person name="Creczynski-Pasa T.B."/>
            <person name="Cunha-Junior N.C."/>
            <person name="Fagundes N."/>
            <person name="Falcao C.L."/>
            <person name="Fantinatti F."/>
            <person name="Farias I.P."/>
            <person name="Felipe M.S.S."/>
            <person name="Ferrari L.P."/>
            <person name="Ferro J.A."/>
            <person name="Ferro M.I.T."/>
            <person name="Franco G.R."/>
            <person name="Freitas N.S.A."/>
            <person name="Furlan L.R."/>
            <person name="Gazzinelli R.T."/>
            <person name="Gomes E.A."/>
            <person name="Goncalves P.R."/>
            <person name="Grangeiro T.B."/>
            <person name="Grattapaglia D."/>
            <person name="Grisard E.C."/>
            <person name="Hanna E.S."/>
            <person name="Jardim S.N."/>
            <person name="Laurino J."/>
            <person name="Leoi L.C.T."/>
            <person name="Lima L.F.A."/>
            <person name="Loureiro M.F."/>
            <person name="Lyra M.C.C.P."/>
            <person name="Madeira H.M.F."/>
            <person name="Manfio G.P."/>
            <person name="Maranhao A.Q."/>
            <person name="Martins W.S."/>
            <person name="di Mauro S.M.Z."/>
            <person name="de Medeiros S.R.B."/>
            <person name="Meissner R.V."/>
            <person name="Moreira M.A.M."/>
            <person name="Nascimento F.F."/>
            <person name="Nicolas M.F."/>
            <person name="Oliveira J.G."/>
            <person name="Oliveira S.C."/>
            <person name="Paixao R.F.C."/>
            <person name="Parente J.A."/>
            <person name="Pedrosa F.O."/>
            <person name="Pena S.D.J."/>
            <person name="Pereira J.O."/>
            <person name="Pereira M."/>
            <person name="Pinto L.S.R.C."/>
            <person name="Pinto L.S."/>
            <person name="Porto J.I.R."/>
            <person name="Potrich D.P."/>
            <person name="Ramalho-Neto C.E."/>
            <person name="Reis A.M.M."/>
            <person name="Rigo L.U."/>
            <person name="Rondinelli E."/>
            <person name="Santos E.B.P."/>
            <person name="Santos F.R."/>
            <person name="Schneider M.P.C."/>
            <person name="Seuanez H.N."/>
            <person name="Silva A.M.R."/>
            <person name="da Silva A.L.C."/>
            <person name="Silva D.W."/>
            <person name="Silva R."/>
            <person name="Simoes I.C."/>
            <person name="Simon D."/>
            <person name="Soares C.M.A."/>
            <person name="Soares R.B.A."/>
            <person name="Souza E.M."/>
            <person name="Souza K.R.L."/>
            <person name="Souza R.C."/>
            <person name="Steffens M.B.R."/>
            <person name="Steindel M."/>
            <person name="Teixeira S.R."/>
            <person name="Urmenyi T."/>
            <person name="Vettore A."/>
            <person name="Wassem R."/>
            <person name="Zaha A."/>
            <person name="Simpson A.J.G."/>
        </authorList>
    </citation>
    <scope>NUCLEOTIDE SEQUENCE [LARGE SCALE GENOMIC DNA]</scope>
    <source>
        <strain>ATCC 12472 / DSM 30191 / JCM 1249 / CCUG 213 / NBRC 12614 / NCIMB 9131 / NCTC 9757 / MK</strain>
    </source>
</reference>
<proteinExistence type="inferred from homology"/>
<organism>
    <name type="scientific">Chromobacterium violaceum (strain ATCC 12472 / DSM 30191 / JCM 1249 / CCUG 213 / NBRC 12614 / NCIMB 9131 / NCTC 9757 / MK)</name>
    <dbReference type="NCBI Taxonomy" id="243365"/>
    <lineage>
        <taxon>Bacteria</taxon>
        <taxon>Pseudomonadati</taxon>
        <taxon>Pseudomonadota</taxon>
        <taxon>Betaproteobacteria</taxon>
        <taxon>Neisseriales</taxon>
        <taxon>Chromobacteriaceae</taxon>
        <taxon>Chromobacterium</taxon>
    </lineage>
</organism>
<dbReference type="EMBL" id="AE016825">
    <property type="protein sequence ID" value="AAQ61720.1"/>
    <property type="molecule type" value="Genomic_DNA"/>
</dbReference>
<dbReference type="RefSeq" id="WP_011137607.1">
    <property type="nucleotide sequence ID" value="NC_005085.1"/>
</dbReference>
<dbReference type="SMR" id="Q7NQS7"/>
<dbReference type="STRING" id="243365.CV_4060"/>
<dbReference type="KEGG" id="cvi:CV_4060"/>
<dbReference type="eggNOG" id="COG3017">
    <property type="taxonomic scope" value="Bacteria"/>
</dbReference>
<dbReference type="HOGENOM" id="CLU_092816_2_1_4"/>
<dbReference type="OrthoDB" id="5296388at2"/>
<dbReference type="Proteomes" id="UP000001424">
    <property type="component" value="Chromosome"/>
</dbReference>
<dbReference type="GO" id="GO:0009279">
    <property type="term" value="C:cell outer membrane"/>
    <property type="evidence" value="ECO:0007669"/>
    <property type="project" value="UniProtKB-SubCell"/>
</dbReference>
<dbReference type="GO" id="GO:0044874">
    <property type="term" value="P:lipoprotein localization to outer membrane"/>
    <property type="evidence" value="ECO:0007669"/>
    <property type="project" value="UniProtKB-UniRule"/>
</dbReference>
<dbReference type="GO" id="GO:0015031">
    <property type="term" value="P:protein transport"/>
    <property type="evidence" value="ECO:0007669"/>
    <property type="project" value="UniProtKB-KW"/>
</dbReference>
<dbReference type="CDD" id="cd16326">
    <property type="entry name" value="LolB"/>
    <property type="match status" value="1"/>
</dbReference>
<dbReference type="Gene3D" id="2.50.20.10">
    <property type="entry name" value="Lipoprotein localisation LolA/LolB/LppX"/>
    <property type="match status" value="1"/>
</dbReference>
<dbReference type="HAMAP" id="MF_00233">
    <property type="entry name" value="LolB"/>
    <property type="match status" value="1"/>
</dbReference>
<dbReference type="InterPro" id="IPR029046">
    <property type="entry name" value="LolA/LolB/LppX"/>
</dbReference>
<dbReference type="InterPro" id="IPR004565">
    <property type="entry name" value="OM_lipoprot_LolB"/>
</dbReference>
<dbReference type="NCBIfam" id="TIGR00548">
    <property type="entry name" value="lolB"/>
    <property type="match status" value="1"/>
</dbReference>
<dbReference type="Pfam" id="PF03550">
    <property type="entry name" value="LolB"/>
    <property type="match status" value="1"/>
</dbReference>
<dbReference type="SUPFAM" id="SSF89392">
    <property type="entry name" value="Prokaryotic lipoproteins and lipoprotein localization factors"/>
    <property type="match status" value="1"/>
</dbReference>
<dbReference type="PROSITE" id="PS51257">
    <property type="entry name" value="PROKAR_LIPOPROTEIN"/>
    <property type="match status" value="1"/>
</dbReference>
<accession>Q7NQS7</accession>
<evidence type="ECO:0000255" key="1">
    <source>
        <dbReference type="HAMAP-Rule" id="MF_00233"/>
    </source>
</evidence>